<dbReference type="EC" id="3.6.1.31" evidence="1"/>
<dbReference type="EMBL" id="CP000572">
    <property type="protein sequence ID" value="ABN91089.1"/>
    <property type="molecule type" value="Genomic_DNA"/>
</dbReference>
<dbReference type="RefSeq" id="WP_004202813.1">
    <property type="nucleotide sequence ID" value="NC_009076.1"/>
</dbReference>
<dbReference type="SMR" id="A3P025"/>
<dbReference type="KEGG" id="bpl:BURPS1106A_3716"/>
<dbReference type="HOGENOM" id="CLU_123337_1_2_4"/>
<dbReference type="UniPathway" id="UPA00031">
    <property type="reaction ID" value="UER00007"/>
</dbReference>
<dbReference type="Proteomes" id="UP000006738">
    <property type="component" value="Chromosome I"/>
</dbReference>
<dbReference type="GO" id="GO:0005737">
    <property type="term" value="C:cytoplasm"/>
    <property type="evidence" value="ECO:0007669"/>
    <property type="project" value="UniProtKB-SubCell"/>
</dbReference>
<dbReference type="GO" id="GO:0005524">
    <property type="term" value="F:ATP binding"/>
    <property type="evidence" value="ECO:0007669"/>
    <property type="project" value="UniProtKB-KW"/>
</dbReference>
<dbReference type="GO" id="GO:0004636">
    <property type="term" value="F:phosphoribosyl-ATP diphosphatase activity"/>
    <property type="evidence" value="ECO:0007669"/>
    <property type="project" value="UniProtKB-UniRule"/>
</dbReference>
<dbReference type="GO" id="GO:0000105">
    <property type="term" value="P:L-histidine biosynthetic process"/>
    <property type="evidence" value="ECO:0007669"/>
    <property type="project" value="UniProtKB-UniRule"/>
</dbReference>
<dbReference type="CDD" id="cd11534">
    <property type="entry name" value="NTP-PPase_HisIE_like"/>
    <property type="match status" value="1"/>
</dbReference>
<dbReference type="Gene3D" id="1.10.287.1080">
    <property type="entry name" value="MazG-like"/>
    <property type="match status" value="1"/>
</dbReference>
<dbReference type="HAMAP" id="MF_01020">
    <property type="entry name" value="HisE"/>
    <property type="match status" value="1"/>
</dbReference>
<dbReference type="InterPro" id="IPR008179">
    <property type="entry name" value="HisE"/>
</dbReference>
<dbReference type="InterPro" id="IPR021130">
    <property type="entry name" value="PRib-ATP_PPHydrolase-like"/>
</dbReference>
<dbReference type="NCBIfam" id="TIGR03188">
    <property type="entry name" value="histidine_hisI"/>
    <property type="match status" value="1"/>
</dbReference>
<dbReference type="NCBIfam" id="NF001611">
    <property type="entry name" value="PRK00400.1-3"/>
    <property type="match status" value="1"/>
</dbReference>
<dbReference type="PANTHER" id="PTHR42945">
    <property type="entry name" value="HISTIDINE BIOSYNTHESIS BIFUNCTIONAL PROTEIN"/>
    <property type="match status" value="1"/>
</dbReference>
<dbReference type="PANTHER" id="PTHR42945:SF9">
    <property type="entry name" value="HISTIDINE BIOSYNTHESIS BIFUNCTIONAL PROTEIN HISIE"/>
    <property type="match status" value="1"/>
</dbReference>
<dbReference type="Pfam" id="PF01503">
    <property type="entry name" value="PRA-PH"/>
    <property type="match status" value="1"/>
</dbReference>
<dbReference type="SUPFAM" id="SSF101386">
    <property type="entry name" value="all-alpha NTP pyrophosphatases"/>
    <property type="match status" value="1"/>
</dbReference>
<feature type="chain" id="PRO_1000063330" description="Phosphoribosyl-ATP pyrophosphatase">
    <location>
        <begin position="1"/>
        <end position="122"/>
    </location>
</feature>
<reference key="1">
    <citation type="journal article" date="2010" name="Genome Biol. Evol.">
        <title>Continuing evolution of Burkholderia mallei through genome reduction and large-scale rearrangements.</title>
        <authorList>
            <person name="Losada L."/>
            <person name="Ronning C.M."/>
            <person name="DeShazer D."/>
            <person name="Woods D."/>
            <person name="Fedorova N."/>
            <person name="Kim H.S."/>
            <person name="Shabalina S.A."/>
            <person name="Pearson T.R."/>
            <person name="Brinkac L."/>
            <person name="Tan P."/>
            <person name="Nandi T."/>
            <person name="Crabtree J."/>
            <person name="Badger J."/>
            <person name="Beckstrom-Sternberg S."/>
            <person name="Saqib M."/>
            <person name="Schutzer S.E."/>
            <person name="Keim P."/>
            <person name="Nierman W.C."/>
        </authorList>
    </citation>
    <scope>NUCLEOTIDE SEQUENCE [LARGE SCALE GENOMIC DNA]</scope>
    <source>
        <strain>1106a</strain>
    </source>
</reference>
<protein>
    <recommendedName>
        <fullName evidence="1">Phosphoribosyl-ATP pyrophosphatase</fullName>
        <shortName evidence="1">PRA-PH</shortName>
        <ecNumber evidence="1">3.6.1.31</ecNumber>
    </recommendedName>
</protein>
<proteinExistence type="inferred from homology"/>
<keyword id="KW-0028">Amino-acid biosynthesis</keyword>
<keyword id="KW-0067">ATP-binding</keyword>
<keyword id="KW-0963">Cytoplasm</keyword>
<keyword id="KW-0368">Histidine biosynthesis</keyword>
<keyword id="KW-0378">Hydrolase</keyword>
<keyword id="KW-0547">Nucleotide-binding</keyword>
<comment type="catalytic activity">
    <reaction evidence="1">
        <text>1-(5-phospho-beta-D-ribosyl)-ATP + H2O = 1-(5-phospho-beta-D-ribosyl)-5'-AMP + diphosphate + H(+)</text>
        <dbReference type="Rhea" id="RHEA:22828"/>
        <dbReference type="ChEBI" id="CHEBI:15377"/>
        <dbReference type="ChEBI" id="CHEBI:15378"/>
        <dbReference type="ChEBI" id="CHEBI:33019"/>
        <dbReference type="ChEBI" id="CHEBI:59457"/>
        <dbReference type="ChEBI" id="CHEBI:73183"/>
        <dbReference type="EC" id="3.6.1.31"/>
    </reaction>
</comment>
<comment type="pathway">
    <text evidence="1">Amino-acid biosynthesis; L-histidine biosynthesis; L-histidine from 5-phospho-alpha-D-ribose 1-diphosphate: step 2/9.</text>
</comment>
<comment type="subcellular location">
    <subcellularLocation>
        <location evidence="1">Cytoplasm</location>
    </subcellularLocation>
</comment>
<comment type="similarity">
    <text evidence="1">Belongs to the PRA-PH family.</text>
</comment>
<name>HIS2_BURP0</name>
<sequence length="122" mass="13361">MTQSTTEDTLLRLAAVIDSRKGGDPEQSYVSRLFHKGDDAILKKIGEEATEVVLAAKDVRQGGAPSALVGEVADLWFHCLVALSHFDLSPADVIAELERREGMSGIEEKALRKRREREENGG</sequence>
<gene>
    <name evidence="1" type="primary">hisE</name>
    <name type="ordered locus">BURPS1106A_3716</name>
</gene>
<accession>A3P025</accession>
<evidence type="ECO:0000255" key="1">
    <source>
        <dbReference type="HAMAP-Rule" id="MF_01020"/>
    </source>
</evidence>
<organism>
    <name type="scientific">Burkholderia pseudomallei (strain 1106a)</name>
    <dbReference type="NCBI Taxonomy" id="357348"/>
    <lineage>
        <taxon>Bacteria</taxon>
        <taxon>Pseudomonadati</taxon>
        <taxon>Pseudomonadota</taxon>
        <taxon>Betaproteobacteria</taxon>
        <taxon>Burkholderiales</taxon>
        <taxon>Burkholderiaceae</taxon>
        <taxon>Burkholderia</taxon>
        <taxon>pseudomallei group</taxon>
    </lineage>
</organism>